<organism>
    <name type="scientific">Salmonella dublin (strain CT_02021853)</name>
    <dbReference type="NCBI Taxonomy" id="439851"/>
    <lineage>
        <taxon>Bacteria</taxon>
        <taxon>Pseudomonadati</taxon>
        <taxon>Pseudomonadota</taxon>
        <taxon>Gammaproteobacteria</taxon>
        <taxon>Enterobacterales</taxon>
        <taxon>Enterobacteriaceae</taxon>
        <taxon>Salmonella</taxon>
    </lineage>
</organism>
<gene>
    <name evidence="1" type="primary">moaA</name>
    <name type="ordered locus">SeD_A0896</name>
</gene>
<feature type="chain" id="PRO_1000139340" description="GTP 3',8-cyclase">
    <location>
        <begin position="1"/>
        <end position="329"/>
    </location>
</feature>
<feature type="domain" description="Radical SAM core" evidence="2">
    <location>
        <begin position="8"/>
        <end position="234"/>
    </location>
</feature>
<feature type="binding site" evidence="1">
    <location>
        <position position="17"/>
    </location>
    <ligand>
        <name>GTP</name>
        <dbReference type="ChEBI" id="CHEBI:37565"/>
    </ligand>
</feature>
<feature type="binding site" evidence="1">
    <location>
        <position position="24"/>
    </location>
    <ligand>
        <name>[4Fe-4S] cluster</name>
        <dbReference type="ChEBI" id="CHEBI:49883"/>
        <label>1</label>
        <note>4Fe-4S-S-AdoMet</note>
    </ligand>
</feature>
<feature type="binding site" evidence="1">
    <location>
        <position position="28"/>
    </location>
    <ligand>
        <name>[4Fe-4S] cluster</name>
        <dbReference type="ChEBI" id="CHEBI:49883"/>
        <label>1</label>
        <note>4Fe-4S-S-AdoMet</note>
    </ligand>
</feature>
<feature type="binding site" evidence="1">
    <location>
        <position position="30"/>
    </location>
    <ligand>
        <name>S-adenosyl-L-methionine</name>
        <dbReference type="ChEBI" id="CHEBI:59789"/>
    </ligand>
</feature>
<feature type="binding site" evidence="1">
    <location>
        <position position="31"/>
    </location>
    <ligand>
        <name>[4Fe-4S] cluster</name>
        <dbReference type="ChEBI" id="CHEBI:49883"/>
        <label>1</label>
        <note>4Fe-4S-S-AdoMet</note>
    </ligand>
</feature>
<feature type="binding site" evidence="1">
    <location>
        <position position="68"/>
    </location>
    <ligand>
        <name>GTP</name>
        <dbReference type="ChEBI" id="CHEBI:37565"/>
    </ligand>
</feature>
<feature type="binding site" evidence="1">
    <location>
        <position position="72"/>
    </location>
    <ligand>
        <name>S-adenosyl-L-methionine</name>
        <dbReference type="ChEBI" id="CHEBI:59789"/>
    </ligand>
</feature>
<feature type="binding site" evidence="1">
    <location>
        <position position="99"/>
    </location>
    <ligand>
        <name>GTP</name>
        <dbReference type="ChEBI" id="CHEBI:37565"/>
    </ligand>
</feature>
<feature type="binding site" evidence="1">
    <location>
        <position position="123"/>
    </location>
    <ligand>
        <name>S-adenosyl-L-methionine</name>
        <dbReference type="ChEBI" id="CHEBI:59789"/>
    </ligand>
</feature>
<feature type="binding site" evidence="1">
    <location>
        <position position="160"/>
    </location>
    <ligand>
        <name>GTP</name>
        <dbReference type="ChEBI" id="CHEBI:37565"/>
    </ligand>
</feature>
<feature type="binding site" evidence="1">
    <location>
        <position position="194"/>
    </location>
    <ligand>
        <name>S-adenosyl-L-methionine</name>
        <dbReference type="ChEBI" id="CHEBI:59789"/>
    </ligand>
</feature>
<feature type="binding site" evidence="1">
    <location>
        <position position="257"/>
    </location>
    <ligand>
        <name>[4Fe-4S] cluster</name>
        <dbReference type="ChEBI" id="CHEBI:49883"/>
        <label>2</label>
        <note>4Fe-4S-substrate</note>
    </ligand>
</feature>
<feature type="binding site" evidence="1">
    <location>
        <position position="260"/>
    </location>
    <ligand>
        <name>[4Fe-4S] cluster</name>
        <dbReference type="ChEBI" id="CHEBI:49883"/>
        <label>2</label>
        <note>4Fe-4S-substrate</note>
    </ligand>
</feature>
<feature type="binding site" evidence="1">
    <location>
        <begin position="262"/>
        <end position="264"/>
    </location>
    <ligand>
        <name>GTP</name>
        <dbReference type="ChEBI" id="CHEBI:37565"/>
    </ligand>
</feature>
<feature type="binding site" evidence="1">
    <location>
        <position position="274"/>
    </location>
    <ligand>
        <name>[4Fe-4S] cluster</name>
        <dbReference type="ChEBI" id="CHEBI:49883"/>
        <label>2</label>
        <note>4Fe-4S-substrate</note>
    </ligand>
</feature>
<reference key="1">
    <citation type="journal article" date="2011" name="J. Bacteriol.">
        <title>Comparative genomics of 28 Salmonella enterica isolates: evidence for CRISPR-mediated adaptive sublineage evolution.</title>
        <authorList>
            <person name="Fricke W.F."/>
            <person name="Mammel M.K."/>
            <person name="McDermott P.F."/>
            <person name="Tartera C."/>
            <person name="White D.G."/>
            <person name="Leclerc J.E."/>
            <person name="Ravel J."/>
            <person name="Cebula T.A."/>
        </authorList>
    </citation>
    <scope>NUCLEOTIDE SEQUENCE [LARGE SCALE GENOMIC DNA]</scope>
    <source>
        <strain>CT_02021853</strain>
    </source>
</reference>
<sequence length="329" mass="37001">MASQLTDAFARKFYYLRLSITDVCNFRCTYCLPDGYKPGGVTNNGFLTVDEIRRVTRAFASLGTEKVRLTGGEPSLRRDFTDIIAAVGENDAIRQIAVTTNGYRLARDAANWREAGLTGVNVSVDSLDARQFHAITGQDKFRQVMAGIDAAFDAGFEKVKVNTVLMRDVNHHQLDTFLAWIQPRPIQLRFIELMETGEGSDLFRKHHISGQVLRDELIKRGWIHQLRQRSDGPAQVFCHPDYAGEIGLIMPYEKDFCATCNRLRVSSVGKLHLCLFGDGGVSLRDLLQDDAQQYALEKRISDALREKKQTHFLHQSNTGITQNLSYIGG</sequence>
<keyword id="KW-0004">4Fe-4S</keyword>
<keyword id="KW-0342">GTP-binding</keyword>
<keyword id="KW-0408">Iron</keyword>
<keyword id="KW-0411">Iron-sulfur</keyword>
<keyword id="KW-0456">Lyase</keyword>
<keyword id="KW-0479">Metal-binding</keyword>
<keyword id="KW-0501">Molybdenum cofactor biosynthesis</keyword>
<keyword id="KW-0547">Nucleotide-binding</keyword>
<keyword id="KW-0949">S-adenosyl-L-methionine</keyword>
<accession>B5FP68</accession>
<name>MOAA_SALDC</name>
<evidence type="ECO:0000255" key="1">
    <source>
        <dbReference type="HAMAP-Rule" id="MF_01225"/>
    </source>
</evidence>
<evidence type="ECO:0000255" key="2">
    <source>
        <dbReference type="PROSITE-ProRule" id="PRU01266"/>
    </source>
</evidence>
<protein>
    <recommendedName>
        <fullName evidence="1">GTP 3',8-cyclase</fullName>
        <ecNumber evidence="1">4.1.99.22</ecNumber>
    </recommendedName>
    <alternativeName>
        <fullName evidence="1">Molybdenum cofactor biosynthesis protein A</fullName>
    </alternativeName>
</protein>
<proteinExistence type="inferred from homology"/>
<comment type="function">
    <text evidence="1">Catalyzes the cyclization of GTP to (8S)-3',8-cyclo-7,8-dihydroguanosine 5'-triphosphate.</text>
</comment>
<comment type="catalytic activity">
    <reaction evidence="1">
        <text>GTP + AH2 + S-adenosyl-L-methionine = (8S)-3',8-cyclo-7,8-dihydroguanosine 5'-triphosphate + 5'-deoxyadenosine + L-methionine + A + H(+)</text>
        <dbReference type="Rhea" id="RHEA:49576"/>
        <dbReference type="ChEBI" id="CHEBI:13193"/>
        <dbReference type="ChEBI" id="CHEBI:15378"/>
        <dbReference type="ChEBI" id="CHEBI:17319"/>
        <dbReference type="ChEBI" id="CHEBI:17499"/>
        <dbReference type="ChEBI" id="CHEBI:37565"/>
        <dbReference type="ChEBI" id="CHEBI:57844"/>
        <dbReference type="ChEBI" id="CHEBI:59789"/>
        <dbReference type="ChEBI" id="CHEBI:131766"/>
        <dbReference type="EC" id="4.1.99.22"/>
    </reaction>
</comment>
<comment type="cofactor">
    <cofactor evidence="1">
        <name>[4Fe-4S] cluster</name>
        <dbReference type="ChEBI" id="CHEBI:49883"/>
    </cofactor>
    <text evidence="1">Binds 2 [4Fe-4S] clusters. Binds 1 [4Fe-4S] cluster coordinated with 3 cysteines and an exchangeable S-adenosyl-L-methionine and 1 [4Fe-4S] cluster coordinated with 3 cysteines and the GTP-derived substrate.</text>
</comment>
<comment type="pathway">
    <text evidence="1">Cofactor biosynthesis; molybdopterin biosynthesis.</text>
</comment>
<comment type="subunit">
    <text evidence="1">Monomer and homodimer.</text>
</comment>
<comment type="similarity">
    <text evidence="1">Belongs to the radical SAM superfamily. MoaA family.</text>
</comment>
<dbReference type="EC" id="4.1.99.22" evidence="1"/>
<dbReference type="EMBL" id="CP001144">
    <property type="protein sequence ID" value="ACH73652.1"/>
    <property type="molecule type" value="Genomic_DNA"/>
</dbReference>
<dbReference type="RefSeq" id="WP_000168181.1">
    <property type="nucleotide sequence ID" value="NC_011205.1"/>
</dbReference>
<dbReference type="SMR" id="B5FP68"/>
<dbReference type="KEGG" id="sed:SeD_A0896"/>
<dbReference type="HOGENOM" id="CLU_009273_0_1_6"/>
<dbReference type="UniPathway" id="UPA00344"/>
<dbReference type="Proteomes" id="UP000008322">
    <property type="component" value="Chromosome"/>
</dbReference>
<dbReference type="GO" id="GO:0051539">
    <property type="term" value="F:4 iron, 4 sulfur cluster binding"/>
    <property type="evidence" value="ECO:0007669"/>
    <property type="project" value="UniProtKB-UniRule"/>
</dbReference>
<dbReference type="GO" id="GO:0061799">
    <property type="term" value="F:cyclic pyranopterin monophosphate synthase activity"/>
    <property type="evidence" value="ECO:0007669"/>
    <property type="project" value="TreeGrafter"/>
</dbReference>
<dbReference type="GO" id="GO:0061798">
    <property type="term" value="F:GTP 3',8'-cyclase activity"/>
    <property type="evidence" value="ECO:0007669"/>
    <property type="project" value="UniProtKB-UniRule"/>
</dbReference>
<dbReference type="GO" id="GO:0005525">
    <property type="term" value="F:GTP binding"/>
    <property type="evidence" value="ECO:0007669"/>
    <property type="project" value="UniProtKB-UniRule"/>
</dbReference>
<dbReference type="GO" id="GO:0046872">
    <property type="term" value="F:metal ion binding"/>
    <property type="evidence" value="ECO:0007669"/>
    <property type="project" value="UniProtKB-KW"/>
</dbReference>
<dbReference type="GO" id="GO:1904047">
    <property type="term" value="F:S-adenosyl-L-methionine binding"/>
    <property type="evidence" value="ECO:0007669"/>
    <property type="project" value="UniProtKB-UniRule"/>
</dbReference>
<dbReference type="GO" id="GO:0006777">
    <property type="term" value="P:Mo-molybdopterin cofactor biosynthetic process"/>
    <property type="evidence" value="ECO:0007669"/>
    <property type="project" value="UniProtKB-UniRule"/>
</dbReference>
<dbReference type="CDD" id="cd01335">
    <property type="entry name" value="Radical_SAM"/>
    <property type="match status" value="1"/>
</dbReference>
<dbReference type="CDD" id="cd21117">
    <property type="entry name" value="Twitch_MoaA"/>
    <property type="match status" value="1"/>
</dbReference>
<dbReference type="FunFam" id="3.20.20.70:FF:000057">
    <property type="entry name" value="GTP 3',8-cyclase"/>
    <property type="match status" value="1"/>
</dbReference>
<dbReference type="Gene3D" id="3.20.20.70">
    <property type="entry name" value="Aldolase class I"/>
    <property type="match status" value="1"/>
</dbReference>
<dbReference type="HAMAP" id="MF_01225_B">
    <property type="entry name" value="MoaA_B"/>
    <property type="match status" value="1"/>
</dbReference>
<dbReference type="InterPro" id="IPR013785">
    <property type="entry name" value="Aldolase_TIM"/>
</dbReference>
<dbReference type="InterPro" id="IPR006638">
    <property type="entry name" value="Elp3/MiaA/NifB-like_rSAM"/>
</dbReference>
<dbReference type="InterPro" id="IPR013483">
    <property type="entry name" value="MoaA"/>
</dbReference>
<dbReference type="InterPro" id="IPR000385">
    <property type="entry name" value="MoaA_NifB_PqqE_Fe-S-bd_CS"/>
</dbReference>
<dbReference type="InterPro" id="IPR010505">
    <property type="entry name" value="MoaA_twitch"/>
</dbReference>
<dbReference type="InterPro" id="IPR050105">
    <property type="entry name" value="MoCo_biosynth_MoaA/MoaC"/>
</dbReference>
<dbReference type="InterPro" id="IPR007197">
    <property type="entry name" value="rSAM"/>
</dbReference>
<dbReference type="NCBIfam" id="TIGR02666">
    <property type="entry name" value="moaA"/>
    <property type="match status" value="1"/>
</dbReference>
<dbReference type="PANTHER" id="PTHR22960:SF28">
    <property type="entry name" value="GTP 3',8-CYCLASE"/>
    <property type="match status" value="1"/>
</dbReference>
<dbReference type="PANTHER" id="PTHR22960">
    <property type="entry name" value="MOLYBDOPTERIN COFACTOR SYNTHESIS PROTEIN A"/>
    <property type="match status" value="1"/>
</dbReference>
<dbReference type="Pfam" id="PF06463">
    <property type="entry name" value="Mob_synth_C"/>
    <property type="match status" value="1"/>
</dbReference>
<dbReference type="Pfam" id="PF04055">
    <property type="entry name" value="Radical_SAM"/>
    <property type="match status" value="1"/>
</dbReference>
<dbReference type="SFLD" id="SFLDG01383">
    <property type="entry name" value="cyclic_pyranopterin_phosphate"/>
    <property type="match status" value="1"/>
</dbReference>
<dbReference type="SFLD" id="SFLDG01216">
    <property type="entry name" value="thioether_bond_formation_requi"/>
    <property type="match status" value="1"/>
</dbReference>
<dbReference type="SMART" id="SM00729">
    <property type="entry name" value="Elp3"/>
    <property type="match status" value="1"/>
</dbReference>
<dbReference type="SUPFAM" id="SSF102114">
    <property type="entry name" value="Radical SAM enzymes"/>
    <property type="match status" value="1"/>
</dbReference>
<dbReference type="PROSITE" id="PS01305">
    <property type="entry name" value="MOAA_NIFB_PQQE"/>
    <property type="match status" value="1"/>
</dbReference>
<dbReference type="PROSITE" id="PS51918">
    <property type="entry name" value="RADICAL_SAM"/>
    <property type="match status" value="1"/>
</dbReference>